<keyword id="KW-0010">Activator</keyword>
<keyword id="KW-1185">Reference proteome</keyword>
<keyword id="KW-0804">Transcription</keyword>
<keyword id="KW-0805">Transcription regulation</keyword>
<sequence length="260" mass="29941">MSIRIKIDKLRQIVAYFSEFSEEVSINVDSTDELMYIFAALGGSVNIWAIIPLSASVFYRGAENIVFNLPVSKVKSCLCSFHNDAIIDIEPDLENNLVKLSSYHVVSVDCNKELMPIRTDTTICLSIDQKKSYVFNFHKYEEKCCGRTVIHLEWLLGFIKCISQHQHLTIMFKDDNIIMKTPGNTDAFSREYSMTECSQELQKFSFKIAISSLNKLRGFKKRVNVFETRIVMDNDDNILGMLFSDRVQSFKINIFMAFLD</sequence>
<organismHost>
    <name type="scientific">Homo sapiens</name>
    <name type="common">Human</name>
    <dbReference type="NCBI Taxonomy" id="9606"/>
</organismHost>
<name>VLTF1_VAR67</name>
<dbReference type="EMBL" id="X67119">
    <property type="protein sequence ID" value="CAA47570.1"/>
    <property type="molecule type" value="Genomic_DNA"/>
</dbReference>
<dbReference type="EMBL" id="X69198">
    <property type="protein sequence ID" value="CAA49012.1"/>
    <property type="molecule type" value="Genomic_DNA"/>
</dbReference>
<dbReference type="EMBL" id="X76267">
    <property type="protein sequence ID" value="CAA53876.1"/>
    <property type="molecule type" value="Genomic_DNA"/>
</dbReference>
<dbReference type="PIR" id="E36844">
    <property type="entry name" value="E36844"/>
</dbReference>
<dbReference type="PIR" id="E72159">
    <property type="entry name" value="E72159"/>
</dbReference>
<dbReference type="KEGG" id="vg:1486437"/>
<dbReference type="Proteomes" id="UP000002060">
    <property type="component" value="Segment"/>
</dbReference>
<dbReference type="GO" id="GO:0006355">
    <property type="term" value="P:regulation of DNA-templated transcription"/>
    <property type="evidence" value="ECO:0007669"/>
    <property type="project" value="InterPro"/>
</dbReference>
<dbReference type="InterPro" id="IPR005022">
    <property type="entry name" value="Pox_TAP"/>
</dbReference>
<dbReference type="Pfam" id="PF03355">
    <property type="entry name" value="Pox_TAP"/>
    <property type="match status" value="1"/>
</dbReference>
<feature type="chain" id="PRO_0000099168" description="Late transcription factor 1">
    <location>
        <begin position="1"/>
        <end position="260"/>
    </location>
</feature>
<gene>
    <name type="primary">OPG093</name>
    <name type="synonym">VLTF1</name>
    <name type="ORF">G8R</name>
</gene>
<accession>P32990</accession>
<comment type="function">
    <text evidence="1">Associates with RNA polymerase to initiate transcription from late gene promoters.</text>
</comment>
<comment type="subunit">
    <text evidence="1">Interacts with the late transcription factors VLTF-2 and VLTF-3. Interacts with the late transcription elongation factor VLTF-4. Interacts with itself.</text>
</comment>
<comment type="induction">
    <text>Expressed in the intermediate phase of the viral replicative cycle.</text>
</comment>
<comment type="similarity">
    <text evidence="2">Belongs to the chordopoxvirinae VLTF-1 family.</text>
</comment>
<evidence type="ECO:0000250" key="1">
    <source>
        <dbReference type="UniProtKB" id="P68613"/>
    </source>
</evidence>
<evidence type="ECO:0000305" key="2"/>
<proteinExistence type="evidence at transcript level"/>
<reference key="1">
    <citation type="journal article" date="1993" name="Virus Res.">
        <title>Analysis of the nucleotide sequence of a 43 kbp segment of the genome of variola virus India-1967 strain.</title>
        <authorList>
            <person name="Shchelkunov S.N."/>
            <person name="Blinov V.M."/>
            <person name="Resenchuk S.M."/>
            <person name="Totmenin A.V."/>
            <person name="Sandakhchiev L.S."/>
        </authorList>
    </citation>
    <scope>NUCLEOTIDE SEQUENCE [GENOMIC DNA]</scope>
</reference>
<reference key="2">
    <citation type="journal article" date="1993" name="Virus Res.">
        <title>Nucleotide sequence analysis of variola virus HindIII M, L, I genome fragments.</title>
        <authorList>
            <person name="Shchelkunov S.N."/>
            <person name="Blinov V.M."/>
            <person name="Totmenin A.V."/>
            <person name="Marennikova S.S."/>
            <person name="Kolykhalov A.A."/>
            <person name="Frolov I.V."/>
            <person name="Chizhikov V.E."/>
            <person name="Gytorov V.V."/>
            <person name="Gashikov P.V."/>
            <person name="Belanov E.F."/>
            <person name="Belavin P.A."/>
            <person name="Resenchuk S.M."/>
            <person name="Andzhaparidze O.G."/>
            <person name="Sandakhchiev L.S."/>
        </authorList>
    </citation>
    <scope>NUCLEOTIDE SEQUENCE [GENOMIC DNA]</scope>
</reference>
<reference key="3">
    <citation type="journal article" date="1993" name="FEBS Lett.">
        <title>Genes of variola and vaccinia viruses necessary to overcome the host protective mechanisms.</title>
        <authorList>
            <person name="Shchelkunov S.N."/>
            <person name="Blinov V.M."/>
            <person name="Sandakhchiev L.S."/>
        </authorList>
    </citation>
    <scope>NUCLEOTIDE SEQUENCE [LARGE SCALE GENOMIC DNA]</scope>
</reference>
<reference key="4">
    <citation type="submission" date="1995-12" db="EMBL/GenBank/DDBJ databases">
        <authorList>
            <person name="Shchelkunov S.N."/>
            <person name="Sosnovtsev S.V."/>
            <person name="Totmenin A.V."/>
            <person name="Resenchuk S.M."/>
            <person name="Blinov V.M."/>
            <person name="Sandakhchiev L.S."/>
        </authorList>
    </citation>
    <scope>NUCLEOTIDE SEQUENCE [GENOMIC DNA]</scope>
    <source>
        <strain>Garcia-1966</strain>
    </source>
</reference>
<protein>
    <recommendedName>
        <fullName>Late transcription factor 1</fullName>
        <shortName>VLTF-1</shortName>
    </recommendedName>
    <alternativeName>
        <fullName>Trans-activator protein GK1</fullName>
    </alternativeName>
</protein>
<organism>
    <name type="scientific">Variola virus (isolate Human/India/Ind3/1967)</name>
    <name type="common">VARV</name>
    <name type="synonym">Smallpox virus</name>
    <dbReference type="NCBI Taxonomy" id="587200"/>
    <lineage>
        <taxon>Viruses</taxon>
        <taxon>Varidnaviria</taxon>
        <taxon>Bamfordvirae</taxon>
        <taxon>Nucleocytoviricota</taxon>
        <taxon>Pokkesviricetes</taxon>
        <taxon>Chitovirales</taxon>
        <taxon>Poxviridae</taxon>
        <taxon>Chordopoxvirinae</taxon>
        <taxon>Orthopoxvirus</taxon>
        <taxon>Variola virus</taxon>
    </lineage>
</organism>